<sequence length="339" mass="36916">MLSYSLLLLALAFPAGHAGSCEQASISEKKEKILNLLACWTEGNADNSLSRSGGSPTGDMNYGYRSCNEIKSSDSRAPDGIYTLATEDGESYQTFCDMTTNGGGWTLVASVHENNMFGKCTVGDRWSTQQGNMLQNPEGDGNWANYATFGLPEGATSDDYKNPGYYDIEAKNLALWHVPNKTPMVMWRNSSILRYRTQNGFLTEEGGNLFELYKKYPVKYDIGKCLADNGPAVPVVYDLGSAEKTASLYSPNGRSEFTPGFVQFRAVNSERATLALCAGVKVKGCNVEHHCIGGGGYIPEGSPRQCGDFAALDWDGYGTNLGWSASKQIIEAAVMLFYR</sequence>
<protein>
    <recommendedName>
        <fullName>Intelectin-1</fullName>
    </recommendedName>
    <alternativeName>
        <fullName evidence="7">Embryonic epidermal lectin</fullName>
        <shortName evidence="6 7">Xeel</shortName>
    </alternativeName>
</protein>
<keyword id="KW-0002">3D-structure</keyword>
<keyword id="KW-0106">Calcium</keyword>
<keyword id="KW-0968">Cytoplasmic vesicle</keyword>
<keyword id="KW-1015">Disulfide bond</keyword>
<keyword id="KW-0325">Glycoprotein</keyword>
<keyword id="KW-0430">Lectin</keyword>
<keyword id="KW-0479">Metal-binding</keyword>
<keyword id="KW-1185">Reference proteome</keyword>
<keyword id="KW-0964">Secreted</keyword>
<keyword id="KW-0732">Signal</keyword>
<gene>
    <name type="primary">itln1</name>
</gene>
<accession>Q5PPM0</accession>
<accession>Q800K0</accession>
<comment type="function">
    <text evidence="4 5 8">Lectin that specifically recognizes microbial carbohydrate chains in a calcium-dependent manner (PubMed:26755729). Binds to microbial glycans that contain a terminal acyclic 1,2-diol moiety, including beta-linked D-galactofuranose (beta-Galf) and D-phosphoglycerol-modified glycans (PubMed:26755729). Binds to S.pneumoniae serotypes with glycans that contain beta-linked D-galactofuranose (beta-Galf) and with D-phosphoglycerol-modified glycans (PubMed:26755729). Can bind a variety of monosaccharides (in vitro) (PubMed:15537792). Probably plays a role in the defense system against microorganisms (Probable).</text>
</comment>
<comment type="subunit">
    <text evidence="4 5">Homotrimer; disulfide-linked (PubMed:26755729). Homohexamer; disulfide-linked (PubMed:15537792, PubMed:26755729). Forms primarily homotrimers in solution, but can also form homohexamers (PubMed:26755729).</text>
</comment>
<comment type="subcellular location">
    <subcellularLocation>
        <location evidence="4 10">Secreted</location>
    </subcellularLocation>
    <subcellularLocation>
        <location evidence="4">Cytoplasmic vesicle</location>
        <location evidence="4">Secretory vesicle</location>
    </subcellularLocation>
</comment>
<comment type="developmental stage">
    <text evidence="3 4">Detected in embryonic epidermal cells; expression increases during neurula and tailbud stage and decreases again after 1 week dpf (at protein level) (PubMed:15537792). First detected in gastrula-stage embryos; expression increases during later stages of embryogenesis. Detected in epidermis and throughout the embryo.</text>
</comment>
<comment type="PTM">
    <text evidence="4">N-glycosylated.</text>
</comment>
<comment type="sequence caution" evidence="8">
    <conflict type="erroneous initiation">
        <sequence resource="EMBL-CDS" id="BAC65329"/>
    </conflict>
    <text>Extended N-terminus.</text>
</comment>
<name>ITLN1_XENLA</name>
<proteinExistence type="evidence at protein level"/>
<dbReference type="EMBL" id="AB105372">
    <property type="protein sequence ID" value="BAC65329.1"/>
    <property type="status" value="ALT_INIT"/>
    <property type="molecule type" value="mRNA"/>
</dbReference>
<dbReference type="EMBL" id="BC087616">
    <property type="protein sequence ID" value="AAH87616.1"/>
    <property type="molecule type" value="mRNA"/>
</dbReference>
<dbReference type="RefSeq" id="NP_001082570.1">
    <property type="nucleotide sequence ID" value="NM_001089101.1"/>
</dbReference>
<dbReference type="PDB" id="4WMO">
    <property type="method" value="X-ray"/>
    <property type="resolution" value="2.30 A"/>
    <property type="chains" value="A/B/C/D/E/F=51-339"/>
</dbReference>
<dbReference type="PDB" id="4WN0">
    <property type="method" value="X-ray"/>
    <property type="resolution" value="2.20 A"/>
    <property type="chains" value="A=51-339"/>
</dbReference>
<dbReference type="PDB" id="5ZC0">
    <property type="method" value="X-ray"/>
    <property type="resolution" value="2.75 A"/>
    <property type="chains" value="A/B/C/D/E/F=51-339"/>
</dbReference>
<dbReference type="PDBsum" id="4WMO"/>
<dbReference type="PDBsum" id="4WN0"/>
<dbReference type="PDBsum" id="5ZC0"/>
<dbReference type="SMR" id="Q5PPM0"/>
<dbReference type="UniLectin" id="Q5PPM0"/>
<dbReference type="GlyCosmos" id="Q5PPM0">
    <property type="glycosylation" value="1 site, No reported glycans"/>
</dbReference>
<dbReference type="iPTMnet" id="Q5PPM0"/>
<dbReference type="DNASU" id="398574"/>
<dbReference type="GeneID" id="398574"/>
<dbReference type="KEGG" id="xla:398574"/>
<dbReference type="AGR" id="Xenbase:XB-GENE-6256033"/>
<dbReference type="CTD" id="398574"/>
<dbReference type="Xenbase" id="XB-GENE-6256033">
    <property type="gene designation" value="itln1.L"/>
</dbReference>
<dbReference type="OrthoDB" id="5971203at2759"/>
<dbReference type="EvolutionaryTrace" id="Q5PPM0"/>
<dbReference type="Proteomes" id="UP000186698">
    <property type="component" value="Chromosome 7L"/>
</dbReference>
<dbReference type="Bgee" id="398574">
    <property type="expression patterns" value="Expressed in neurula embryo and 16 other cell types or tissues"/>
</dbReference>
<dbReference type="GO" id="GO:0005576">
    <property type="term" value="C:extracellular region"/>
    <property type="evidence" value="ECO:0000314"/>
    <property type="project" value="UniProtKB"/>
</dbReference>
<dbReference type="GO" id="GO:0005615">
    <property type="term" value="C:extracellular space"/>
    <property type="evidence" value="ECO:0000318"/>
    <property type="project" value="GO_Central"/>
</dbReference>
<dbReference type="GO" id="GO:0030141">
    <property type="term" value="C:secretory granule"/>
    <property type="evidence" value="ECO:0000314"/>
    <property type="project" value="UniProtKB"/>
</dbReference>
<dbReference type="GO" id="GO:0030133">
    <property type="term" value="C:transport vesicle"/>
    <property type="evidence" value="ECO:0007669"/>
    <property type="project" value="UniProtKB-SubCell"/>
</dbReference>
<dbReference type="GO" id="GO:0005509">
    <property type="term" value="F:calcium ion binding"/>
    <property type="evidence" value="ECO:0000314"/>
    <property type="project" value="UniProtKB"/>
</dbReference>
<dbReference type="GO" id="GO:0070492">
    <property type="term" value="F:oligosaccharide binding"/>
    <property type="evidence" value="ECO:0000318"/>
    <property type="project" value="GO_Central"/>
</dbReference>
<dbReference type="GO" id="GO:0034214">
    <property type="term" value="P:protein hexamerization"/>
    <property type="evidence" value="ECO:0000314"/>
    <property type="project" value="UniProtKB"/>
</dbReference>
<dbReference type="FunFam" id="3.90.215.10:FF:000011">
    <property type="entry name" value="Intelectin 1"/>
    <property type="match status" value="1"/>
</dbReference>
<dbReference type="Gene3D" id="3.90.215.10">
    <property type="entry name" value="Gamma Fibrinogen, chain A, domain 1"/>
    <property type="match status" value="1"/>
</dbReference>
<dbReference type="InterPro" id="IPR036056">
    <property type="entry name" value="Fibrinogen-like_C"/>
</dbReference>
<dbReference type="InterPro" id="IPR014716">
    <property type="entry name" value="Fibrinogen_a/b/g_C_1"/>
</dbReference>
<dbReference type="InterPro" id="IPR002181">
    <property type="entry name" value="Fibrinogen_a/b/g_C_dom"/>
</dbReference>
<dbReference type="NCBIfam" id="NF040941">
    <property type="entry name" value="GGGWT_bact"/>
    <property type="match status" value="1"/>
</dbReference>
<dbReference type="PANTHER" id="PTHR16146">
    <property type="entry name" value="INTELECTIN"/>
    <property type="match status" value="1"/>
</dbReference>
<dbReference type="PANTHER" id="PTHR16146:SF52">
    <property type="entry name" value="INTELECTIN-1"/>
    <property type="match status" value="1"/>
</dbReference>
<dbReference type="Pfam" id="PF00147">
    <property type="entry name" value="Fibrinogen_C"/>
    <property type="match status" value="1"/>
</dbReference>
<dbReference type="SUPFAM" id="SSF56496">
    <property type="entry name" value="Fibrinogen C-terminal domain-like"/>
    <property type="match status" value="1"/>
</dbReference>
<dbReference type="PROSITE" id="PS51406">
    <property type="entry name" value="FIBRINOGEN_C_2"/>
    <property type="match status" value="1"/>
</dbReference>
<reference key="1">
    <citation type="journal article" date="2003" name="Dev. Genes Evol.">
        <title>Developmental expression of XEEL, a novel molecule of the Xenopus oocyte cortical granule lectin family.</title>
        <authorList>
            <person name="Nagata S."/>
            <person name="Nakanishi M."/>
            <person name="Nanba R."/>
            <person name="Fujita N."/>
        </authorList>
    </citation>
    <scope>NUCLEOTIDE SEQUENCE [MRNA]</scope>
    <scope>DEVELOPMENTAL STAGE</scope>
</reference>
<reference key="2">
    <citation type="submission" date="2004-12" db="EMBL/GenBank/DDBJ databases">
        <authorList>
            <consortium name="NIH - Xenopus Gene Collection (XGC) project"/>
        </authorList>
    </citation>
    <scope>NUCLEOTIDE SEQUENCE [LARGE SCALE MRNA]</scope>
    <source>
        <tissue evidence="11">Embryo</tissue>
    </source>
</reference>
<reference key="3">
    <citation type="journal article" date="2005" name="Glycobiology">
        <title>Isolation, characterization, and extra-embryonic secretion of the Xenopus laevis embryonic epidermal lectin, XEEL.</title>
        <authorList>
            <person name="Nagata S."/>
        </authorList>
    </citation>
    <scope>FUNCTION</scope>
    <scope>SUBCELLULAR LOCATION</scope>
    <scope>SUBUNIT</scope>
    <scope>GLYCOSYLATION AT ASN-189</scope>
    <scope>MUTAGENESIS OF ASN-180 AND ASN-189</scope>
</reference>
<reference evidence="12 13" key="4">
    <citation type="journal article" date="2016" name="J. Biol. Chem.">
        <title>Structures of Xenopus embryonic epidermal lectin reveal a conserved mechanism of microbial glycan recognition.</title>
        <authorList>
            <person name="Wangkanont K."/>
            <person name="Wesener D.A."/>
            <person name="Vidani J.A."/>
            <person name="Kiessling L.L."/>
            <person name="Forest K.T."/>
        </authorList>
    </citation>
    <scope>X-RAY CRYSTALLOGRAPHY (2.20 ANGSTROMS) OF 51-339 IN COMPLEX WITH CALCIUM IONS AND GLYCEROL 1-PHOSPHATE</scope>
    <scope>FUNCTION</scope>
    <scope>DISULFIDE BONDS</scope>
    <scope>SUBUNIT</scope>
    <scope>SUBCELLULAR LOCATION</scope>
</reference>
<evidence type="ECO:0000255" key="1"/>
<evidence type="ECO:0000255" key="2">
    <source>
        <dbReference type="PROSITE-ProRule" id="PRU00739"/>
    </source>
</evidence>
<evidence type="ECO:0000269" key="3">
    <source>
    </source>
</evidence>
<evidence type="ECO:0000269" key="4">
    <source>
    </source>
</evidence>
<evidence type="ECO:0000269" key="5">
    <source>
    </source>
</evidence>
<evidence type="ECO:0000303" key="6">
    <source>
    </source>
</evidence>
<evidence type="ECO:0000303" key="7">
    <source>
    </source>
</evidence>
<evidence type="ECO:0000305" key="8"/>
<evidence type="ECO:0000305" key="9">
    <source>
    </source>
</evidence>
<evidence type="ECO:0000305" key="10">
    <source>
    </source>
</evidence>
<evidence type="ECO:0000312" key="11">
    <source>
        <dbReference type="EMBL" id="AAH87616.1"/>
    </source>
</evidence>
<evidence type="ECO:0007744" key="12">
    <source>
        <dbReference type="PDB" id="4WMO"/>
    </source>
</evidence>
<evidence type="ECO:0007744" key="13">
    <source>
        <dbReference type="PDB" id="4WN0"/>
    </source>
</evidence>
<evidence type="ECO:0007829" key="14">
    <source>
        <dbReference type="PDB" id="4WN0"/>
    </source>
</evidence>
<evidence type="ECO:0007829" key="15">
    <source>
        <dbReference type="PDB" id="5ZC0"/>
    </source>
</evidence>
<feature type="signal peptide" evidence="1">
    <location>
        <begin position="1"/>
        <end position="18"/>
    </location>
</feature>
<feature type="chain" id="PRO_5004261008" description="Intelectin-1">
    <location>
        <begin position="19"/>
        <end position="339"/>
    </location>
</feature>
<feature type="domain" description="Fibrinogen C-terminal" evidence="2">
    <location>
        <begin position="58"/>
        <end position="108"/>
    </location>
</feature>
<feature type="binding site" evidence="5 12 13">
    <location>
        <position position="112"/>
    </location>
    <ligand>
        <name>Ca(2+)</name>
        <dbReference type="ChEBI" id="CHEBI:29108"/>
        <label>1</label>
    </ligand>
</feature>
<feature type="binding site" evidence="5 12 13">
    <location>
        <position position="113"/>
    </location>
    <ligand>
        <name>Ca(2+)</name>
        <dbReference type="ChEBI" id="CHEBI:29108"/>
        <label>2</label>
    </ligand>
</feature>
<feature type="binding site" evidence="5 12 13">
    <location>
        <position position="115"/>
    </location>
    <ligand>
        <name>Ca(2+)</name>
        <dbReference type="ChEBI" id="CHEBI:29108"/>
        <label>2</label>
    </ligand>
</feature>
<feature type="binding site" evidence="5 12 13">
    <location>
        <position position="118"/>
    </location>
    <ligand>
        <name>Ca(2+)</name>
        <dbReference type="ChEBI" id="CHEBI:29108"/>
        <label>2</label>
    </ligand>
</feature>
<feature type="binding site" evidence="5 12 13">
    <location>
        <position position="123"/>
    </location>
    <ligand>
        <name>Ca(2+)</name>
        <dbReference type="ChEBI" id="CHEBI:29108"/>
        <label>1</label>
    </ligand>
</feature>
<feature type="binding site" evidence="5 12 13">
    <location>
        <position position="124"/>
    </location>
    <ligand>
        <name>Ca(2+)</name>
        <dbReference type="ChEBI" id="CHEBI:29108"/>
        <label>2</label>
    </ligand>
</feature>
<feature type="binding site" evidence="5 12 13">
    <location>
        <position position="159"/>
    </location>
    <ligand>
        <name>Ca(2+)</name>
        <dbReference type="ChEBI" id="CHEBI:29108"/>
        <label>1</label>
    </ligand>
</feature>
<feature type="binding site" evidence="5 12 13">
    <location>
        <position position="286"/>
    </location>
    <ligand>
        <name>Ca(2+)</name>
        <dbReference type="ChEBI" id="CHEBI:29108"/>
        <label>3</label>
    </ligand>
</feature>
<feature type="binding site" evidence="10">
    <location>
        <begin position="288"/>
        <end position="289"/>
    </location>
    <ligand>
        <name>a carbohydrate</name>
        <dbReference type="ChEBI" id="CHEBI:16646"/>
    </ligand>
</feature>
<feature type="binding site" evidence="5 12 13">
    <location>
        <position position="288"/>
    </location>
    <ligand>
        <name>Ca(2+)</name>
        <dbReference type="ChEBI" id="CHEBI:29108"/>
        <label>3</label>
    </ligand>
</feature>
<feature type="binding site" evidence="10">
    <location>
        <position position="300"/>
    </location>
    <ligand>
        <name>a carbohydrate</name>
        <dbReference type="ChEBI" id="CHEBI:16646"/>
    </ligand>
</feature>
<feature type="binding site" evidence="5 12 13">
    <location>
        <position position="300"/>
    </location>
    <ligand>
        <name>Ca(2+)</name>
        <dbReference type="ChEBI" id="CHEBI:29108"/>
        <label>3</label>
    </ligand>
</feature>
<feature type="binding site" evidence="5 12 13">
    <location>
        <position position="308"/>
    </location>
    <ligand>
        <name>Ca(2+)</name>
        <dbReference type="ChEBI" id="CHEBI:29108"/>
        <label>1</label>
    </ligand>
</feature>
<feature type="glycosylation site" description="N-linked (GlcNAc...) asparagine" evidence="9">
    <location>
        <position position="189"/>
    </location>
</feature>
<feature type="disulfide bond" description="Interchain (with C-39)" evidence="10">
    <location>
        <position position="21"/>
    </location>
</feature>
<feature type="disulfide bond" description="Interchain (with C-21)" evidence="10">
    <location>
        <position position="39"/>
    </location>
</feature>
<feature type="disulfide bond" evidence="2 12 13">
    <location>
        <begin position="67"/>
        <end position="96"/>
    </location>
</feature>
<feature type="disulfide bond" evidence="12 13">
    <location>
        <begin position="120"/>
        <end position="306"/>
    </location>
</feature>
<feature type="disulfide bond" evidence="12 13">
    <location>
        <begin position="225"/>
        <end position="285"/>
    </location>
</feature>
<feature type="disulfide bond" evidence="12 13">
    <location>
        <begin position="277"/>
        <end position="291"/>
    </location>
</feature>
<feature type="mutagenesis site" description="No effect on N-glycosylation." evidence="4">
    <original>N</original>
    <variation>Q</variation>
    <location>
        <position position="180"/>
    </location>
</feature>
<feature type="mutagenesis site" description="Abolishes N-glycosylation." evidence="4">
    <original>N</original>
    <variation>Q</variation>
    <location>
        <position position="189"/>
    </location>
</feature>
<feature type="sequence conflict" description="In Ref. 1; BAC65329." evidence="8" ref="1">
    <original>L</original>
    <variation>F</variation>
    <location>
        <position position="9"/>
    </location>
</feature>
<feature type="sequence conflict" description="In Ref. 1; BAC65329." evidence="8" ref="1">
    <original>S</original>
    <variation>T</variation>
    <location>
        <position position="269"/>
    </location>
</feature>
<feature type="sequence conflict" description="In Ref. 1; BAC65329." evidence="8" ref="1">
    <original>G</original>
    <variation>A</variation>
    <location>
        <position position="301"/>
    </location>
</feature>
<feature type="strand" evidence="15">
    <location>
        <begin position="61"/>
        <end position="63"/>
    </location>
</feature>
<feature type="helix" evidence="14">
    <location>
        <begin position="67"/>
        <end position="73"/>
    </location>
</feature>
<feature type="strand" evidence="14">
    <location>
        <begin position="79"/>
        <end position="85"/>
    </location>
</feature>
<feature type="strand" evidence="14">
    <location>
        <begin position="91"/>
        <end position="97"/>
    </location>
</feature>
<feature type="helix" evidence="14">
    <location>
        <begin position="100"/>
        <end position="102"/>
    </location>
</feature>
<feature type="strand" evidence="14">
    <location>
        <begin position="105"/>
        <end position="111"/>
    </location>
</feature>
<feature type="strand" evidence="15">
    <location>
        <begin position="118"/>
        <end position="120"/>
    </location>
</feature>
<feature type="turn" evidence="14">
    <location>
        <begin position="137"/>
        <end position="140"/>
    </location>
</feature>
<feature type="helix" evidence="14">
    <location>
        <begin position="142"/>
        <end position="144"/>
    </location>
</feature>
<feature type="helix" evidence="14">
    <location>
        <begin position="152"/>
        <end position="154"/>
    </location>
</feature>
<feature type="turn" evidence="14">
    <location>
        <begin position="155"/>
        <end position="157"/>
    </location>
</feature>
<feature type="helix" evidence="14">
    <location>
        <begin position="164"/>
        <end position="167"/>
    </location>
</feature>
<feature type="strand" evidence="14">
    <location>
        <begin position="171"/>
        <end position="179"/>
    </location>
</feature>
<feature type="helix" evidence="14">
    <location>
        <begin position="184"/>
        <end position="186"/>
    </location>
</feature>
<feature type="helix" evidence="14">
    <location>
        <begin position="187"/>
        <end position="190"/>
    </location>
</feature>
<feature type="strand" evidence="14">
    <location>
        <begin position="192"/>
        <end position="196"/>
    </location>
</feature>
<feature type="helix" evidence="14">
    <location>
        <begin position="201"/>
        <end position="205"/>
    </location>
</feature>
<feature type="helix" evidence="14">
    <location>
        <begin position="209"/>
        <end position="215"/>
    </location>
</feature>
<feature type="turn" evidence="14">
    <location>
        <begin position="225"/>
        <end position="228"/>
    </location>
</feature>
<feature type="strand" evidence="14">
    <location>
        <begin position="232"/>
        <end position="234"/>
    </location>
</feature>
<feature type="strand" evidence="14">
    <location>
        <begin position="236"/>
        <end position="240"/>
    </location>
</feature>
<feature type="helix" evidence="14">
    <location>
        <begin position="242"/>
        <end position="248"/>
    </location>
</feature>
<feature type="helix" evidence="14">
    <location>
        <begin position="251"/>
        <end position="254"/>
    </location>
</feature>
<feature type="strand" evidence="14">
    <location>
        <begin position="257"/>
        <end position="267"/>
    </location>
</feature>
<feature type="strand" evidence="14">
    <location>
        <begin position="273"/>
        <end position="282"/>
    </location>
</feature>
<feature type="helix" evidence="14">
    <location>
        <begin position="287"/>
        <end position="289"/>
    </location>
</feature>
<feature type="strand" evidence="14">
    <location>
        <begin position="292"/>
        <end position="294"/>
    </location>
</feature>
<feature type="turn" evidence="14">
    <location>
        <begin position="300"/>
        <end position="305"/>
    </location>
</feature>
<feature type="turn" evidence="14">
    <location>
        <begin position="308"/>
        <end position="315"/>
    </location>
</feature>
<feature type="helix" evidence="14">
    <location>
        <begin position="327"/>
        <end position="330"/>
    </location>
</feature>
<feature type="strand" evidence="14">
    <location>
        <begin position="332"/>
        <end position="339"/>
    </location>
</feature>
<organism evidence="11">
    <name type="scientific">Xenopus laevis</name>
    <name type="common">African clawed frog</name>
    <dbReference type="NCBI Taxonomy" id="8355"/>
    <lineage>
        <taxon>Eukaryota</taxon>
        <taxon>Metazoa</taxon>
        <taxon>Chordata</taxon>
        <taxon>Craniata</taxon>
        <taxon>Vertebrata</taxon>
        <taxon>Euteleostomi</taxon>
        <taxon>Amphibia</taxon>
        <taxon>Batrachia</taxon>
        <taxon>Anura</taxon>
        <taxon>Pipoidea</taxon>
        <taxon>Pipidae</taxon>
        <taxon>Xenopodinae</taxon>
        <taxon>Xenopus</taxon>
        <taxon>Xenopus</taxon>
    </lineage>
</organism>